<sequence>MSPSLFRSEEVSLVQLYLPTESARPIMSALGELSTIHFKDLNPDVVAFQRSFVREIRRLTDTERLLRYLHSEIDLNGIHVPDHNLPPSYESVLESSTIEDIIERITRLEARVRQLVESSQLLEARYLQQLEFANVLTKADAFFSKSGNTVDPLRNNYETSSIFSGEDDTTAPLIENALELGTTGTFDSEETSPQMNTTLDFVSGIIPTVKFQFLERILWRTLRGNLFIHQVRADDSLIHGAEKNEEKTIFLVIAHGTQILLRIRKISESLGATLFPVEEDAPGRTSQIQQANVSISDLNAVLENTRSALYTELTFIAEHISAWEAVLHKDKTVFQVMNLFNYDQNHKCLIAEGWCPTANLPMVQKTLRNISDLTDSQAPTILNVVHTSEQPPTYFRVNKFTEGFQSIIDSYGIATYREVNHGIVAIVTFPFLFAIMFGDLGHGAIMASVALMFVLYEKTLGAKKDLDEIVGMVFYGRYIVLLMGLFSMYVGFVYNDLFSKPMSIFSSRWVWPVKSEEAIARAVQVGTYPIGIDPTWHSADNNLLFMNSYKMKLSIILGVIHMTFCLFLSLSNYRFFKRKLDIYAVFVPSLIFLEAIFGYLVITIVYKWCIDWKAKDLQPPSLLNMLILMFLSPGTLEDQLYPGQKYLQVGLVIAALICVPWLLIVKPFVLWRRHSNEENKYQSLNSDLPNVDEADALMAVDSQEKQAEPFELGEVVIHQVIHTIEFCLGCVSHTASYLRLWALSLAHNQLSSVLWNMTLANGFRMTGIVGSIFVVILFGFWFIATCVVLVAMEGTSAMLHSLRLHWVEGMSKHFEGEGYAFTPFTFKVTAE</sequence>
<organism>
    <name type="scientific">Schizosaccharomyces pombe (strain 972 / ATCC 24843)</name>
    <name type="common">Fission yeast</name>
    <dbReference type="NCBI Taxonomy" id="284812"/>
    <lineage>
        <taxon>Eukaryota</taxon>
        <taxon>Fungi</taxon>
        <taxon>Dikarya</taxon>
        <taxon>Ascomycota</taxon>
        <taxon>Taphrinomycotina</taxon>
        <taxon>Schizosaccharomycetes</taxon>
        <taxon>Schizosaccharomycetales</taxon>
        <taxon>Schizosaccharomycetaceae</taxon>
        <taxon>Schizosaccharomyces</taxon>
    </lineage>
</organism>
<proteinExistence type="inferred from homology"/>
<protein>
    <recommendedName>
        <fullName>V-type proton ATPase subunit a</fullName>
        <shortName>V-ATPase a subunit</shortName>
    </recommendedName>
    <alternativeName>
        <fullName>Vacuolar ATPase 91 kDa subunit</fullName>
    </alternativeName>
    <alternativeName>
        <fullName>Vacuolar proton pump a subunit</fullName>
    </alternativeName>
    <alternativeName>
        <fullName>Vacuolar proton translocating ATPase subunit a</fullName>
    </alternativeName>
</protein>
<evidence type="ECO:0000250" key="1">
    <source>
        <dbReference type="UniProtKB" id="P32563"/>
    </source>
</evidence>
<evidence type="ECO:0000255" key="2"/>
<evidence type="ECO:0000305" key="3"/>
<gene>
    <name type="primary">vph1</name>
    <name type="ORF">SPAC16E8.07c</name>
</gene>
<dbReference type="EMBL" id="CU329670">
    <property type="protein sequence ID" value="CAB11035.2"/>
    <property type="molecule type" value="Genomic_DNA"/>
</dbReference>
<dbReference type="PIR" id="T37787">
    <property type="entry name" value="T37787"/>
</dbReference>
<dbReference type="RefSeq" id="NP_594219.2">
    <property type="nucleotide sequence ID" value="NM_001019642.2"/>
</dbReference>
<dbReference type="SMR" id="O13742"/>
<dbReference type="BioGRID" id="278776">
    <property type="interactions" value="2"/>
</dbReference>
<dbReference type="FunCoup" id="O13742">
    <property type="interactions" value="205"/>
</dbReference>
<dbReference type="STRING" id="284812.O13742"/>
<dbReference type="iPTMnet" id="O13742"/>
<dbReference type="PaxDb" id="4896-SPAC16E8.07c.1"/>
<dbReference type="EnsemblFungi" id="SPAC16E8.07c.1">
    <property type="protein sequence ID" value="SPAC16E8.07c.1:pep"/>
    <property type="gene ID" value="SPAC16E8.07c"/>
</dbReference>
<dbReference type="GeneID" id="2542310"/>
<dbReference type="KEGG" id="spo:2542310"/>
<dbReference type="PomBase" id="SPAC16E8.07c">
    <property type="gene designation" value="vph1"/>
</dbReference>
<dbReference type="VEuPathDB" id="FungiDB:SPAC16E8.07c"/>
<dbReference type="eggNOG" id="KOG2189">
    <property type="taxonomic scope" value="Eukaryota"/>
</dbReference>
<dbReference type="HOGENOM" id="CLU_005230_0_2_1"/>
<dbReference type="InParanoid" id="O13742"/>
<dbReference type="OMA" id="FYLWFFL"/>
<dbReference type="Reactome" id="R-SPO-1222556">
    <property type="pathway name" value="ROS and RNS production in phagocytes"/>
</dbReference>
<dbReference type="Reactome" id="R-SPO-6798695">
    <property type="pathway name" value="Neutrophil degranulation"/>
</dbReference>
<dbReference type="Reactome" id="R-SPO-77387">
    <property type="pathway name" value="Insulin receptor recycling"/>
</dbReference>
<dbReference type="Reactome" id="R-SPO-917977">
    <property type="pathway name" value="Transferrin endocytosis and recycling"/>
</dbReference>
<dbReference type="Reactome" id="R-SPO-9639288">
    <property type="pathway name" value="Amino acids regulate mTORC1"/>
</dbReference>
<dbReference type="PRO" id="PR:O13742"/>
<dbReference type="Proteomes" id="UP000002485">
    <property type="component" value="Chromosome I"/>
</dbReference>
<dbReference type="GO" id="GO:0005783">
    <property type="term" value="C:endoplasmic reticulum"/>
    <property type="evidence" value="ECO:0007005"/>
    <property type="project" value="PomBase"/>
</dbReference>
<dbReference type="GO" id="GO:0000329">
    <property type="term" value="C:fungal-type vacuole membrane"/>
    <property type="evidence" value="ECO:0000318"/>
    <property type="project" value="GO_Central"/>
</dbReference>
<dbReference type="GO" id="GO:0016471">
    <property type="term" value="C:vacuolar proton-transporting V-type ATPase complex"/>
    <property type="evidence" value="ECO:0000318"/>
    <property type="project" value="GO_Central"/>
</dbReference>
<dbReference type="GO" id="GO:0000220">
    <property type="term" value="C:vacuolar proton-transporting V-type ATPase, V0 domain"/>
    <property type="evidence" value="ECO:0000266"/>
    <property type="project" value="PomBase"/>
</dbReference>
<dbReference type="GO" id="GO:0005524">
    <property type="term" value="F:ATP binding"/>
    <property type="evidence" value="ECO:0000305"/>
    <property type="project" value="PomBase"/>
</dbReference>
<dbReference type="GO" id="GO:0016887">
    <property type="term" value="F:ATP hydrolysis activity"/>
    <property type="evidence" value="ECO:0000305"/>
    <property type="project" value="PomBase"/>
</dbReference>
<dbReference type="GO" id="GO:0051117">
    <property type="term" value="F:ATPase binding"/>
    <property type="evidence" value="ECO:0000318"/>
    <property type="project" value="GO_Central"/>
</dbReference>
<dbReference type="GO" id="GO:0046961">
    <property type="term" value="F:proton-transporting ATPase activity, rotational mechanism"/>
    <property type="evidence" value="ECO:0000266"/>
    <property type="project" value="PomBase"/>
</dbReference>
<dbReference type="GO" id="GO:1902600">
    <property type="term" value="P:proton transmembrane transport"/>
    <property type="evidence" value="ECO:0000305"/>
    <property type="project" value="PomBase"/>
</dbReference>
<dbReference type="GO" id="GO:0007035">
    <property type="term" value="P:vacuolar acidification"/>
    <property type="evidence" value="ECO:0000318"/>
    <property type="project" value="GO_Central"/>
</dbReference>
<dbReference type="InterPro" id="IPR002490">
    <property type="entry name" value="V-ATPase_116kDa_su"/>
</dbReference>
<dbReference type="InterPro" id="IPR026028">
    <property type="entry name" value="V-type_ATPase_116kDa_su_euka"/>
</dbReference>
<dbReference type="PANTHER" id="PTHR11629:SF63">
    <property type="entry name" value="V-TYPE PROTON ATPASE SUBUNIT A"/>
    <property type="match status" value="1"/>
</dbReference>
<dbReference type="PANTHER" id="PTHR11629">
    <property type="entry name" value="VACUOLAR PROTON ATPASES"/>
    <property type="match status" value="1"/>
</dbReference>
<dbReference type="Pfam" id="PF01496">
    <property type="entry name" value="V_ATPase_I"/>
    <property type="match status" value="1"/>
</dbReference>
<dbReference type="PIRSF" id="PIRSF001293">
    <property type="entry name" value="ATP6V0A1"/>
    <property type="match status" value="1"/>
</dbReference>
<name>VPP1_SCHPO</name>
<keyword id="KW-0375">Hydrogen ion transport</keyword>
<keyword id="KW-0406">Ion transport</keyword>
<keyword id="KW-0472">Membrane</keyword>
<keyword id="KW-1185">Reference proteome</keyword>
<keyword id="KW-0812">Transmembrane</keyword>
<keyword id="KW-1133">Transmembrane helix</keyword>
<keyword id="KW-0813">Transport</keyword>
<keyword id="KW-0926">Vacuole</keyword>
<reference key="1">
    <citation type="journal article" date="2002" name="Nature">
        <title>The genome sequence of Schizosaccharomyces pombe.</title>
        <authorList>
            <person name="Wood V."/>
            <person name="Gwilliam R."/>
            <person name="Rajandream M.A."/>
            <person name="Lyne M.H."/>
            <person name="Lyne R."/>
            <person name="Stewart A."/>
            <person name="Sgouros J.G."/>
            <person name="Peat N."/>
            <person name="Hayles J."/>
            <person name="Baker S.G."/>
            <person name="Basham D."/>
            <person name="Bowman S."/>
            <person name="Brooks K."/>
            <person name="Brown D."/>
            <person name="Brown S."/>
            <person name="Chillingworth T."/>
            <person name="Churcher C.M."/>
            <person name="Collins M."/>
            <person name="Connor R."/>
            <person name="Cronin A."/>
            <person name="Davis P."/>
            <person name="Feltwell T."/>
            <person name="Fraser A."/>
            <person name="Gentles S."/>
            <person name="Goble A."/>
            <person name="Hamlin N."/>
            <person name="Harris D.E."/>
            <person name="Hidalgo J."/>
            <person name="Hodgson G."/>
            <person name="Holroyd S."/>
            <person name="Hornsby T."/>
            <person name="Howarth S."/>
            <person name="Huckle E.J."/>
            <person name="Hunt S."/>
            <person name="Jagels K."/>
            <person name="James K.D."/>
            <person name="Jones L."/>
            <person name="Jones M."/>
            <person name="Leather S."/>
            <person name="McDonald S."/>
            <person name="McLean J."/>
            <person name="Mooney P."/>
            <person name="Moule S."/>
            <person name="Mungall K.L."/>
            <person name="Murphy L.D."/>
            <person name="Niblett D."/>
            <person name="Odell C."/>
            <person name="Oliver K."/>
            <person name="O'Neil S."/>
            <person name="Pearson D."/>
            <person name="Quail M.A."/>
            <person name="Rabbinowitsch E."/>
            <person name="Rutherford K.M."/>
            <person name="Rutter S."/>
            <person name="Saunders D."/>
            <person name="Seeger K."/>
            <person name="Sharp S."/>
            <person name="Skelton J."/>
            <person name="Simmonds M.N."/>
            <person name="Squares R."/>
            <person name="Squares S."/>
            <person name="Stevens K."/>
            <person name="Taylor K."/>
            <person name="Taylor R.G."/>
            <person name="Tivey A."/>
            <person name="Walsh S.V."/>
            <person name="Warren T."/>
            <person name="Whitehead S."/>
            <person name="Woodward J.R."/>
            <person name="Volckaert G."/>
            <person name="Aert R."/>
            <person name="Robben J."/>
            <person name="Grymonprez B."/>
            <person name="Weltjens I."/>
            <person name="Vanstreels E."/>
            <person name="Rieger M."/>
            <person name="Schaefer M."/>
            <person name="Mueller-Auer S."/>
            <person name="Gabel C."/>
            <person name="Fuchs M."/>
            <person name="Duesterhoeft A."/>
            <person name="Fritzc C."/>
            <person name="Holzer E."/>
            <person name="Moestl D."/>
            <person name="Hilbert H."/>
            <person name="Borzym K."/>
            <person name="Langer I."/>
            <person name="Beck A."/>
            <person name="Lehrach H."/>
            <person name="Reinhardt R."/>
            <person name="Pohl T.M."/>
            <person name="Eger P."/>
            <person name="Zimmermann W."/>
            <person name="Wedler H."/>
            <person name="Wambutt R."/>
            <person name="Purnelle B."/>
            <person name="Goffeau A."/>
            <person name="Cadieu E."/>
            <person name="Dreano S."/>
            <person name="Gloux S."/>
            <person name="Lelaure V."/>
            <person name="Mottier S."/>
            <person name="Galibert F."/>
            <person name="Aves S.J."/>
            <person name="Xiang Z."/>
            <person name="Hunt C."/>
            <person name="Moore K."/>
            <person name="Hurst S.M."/>
            <person name="Lucas M."/>
            <person name="Rochet M."/>
            <person name="Gaillardin C."/>
            <person name="Tallada V.A."/>
            <person name="Garzon A."/>
            <person name="Thode G."/>
            <person name="Daga R.R."/>
            <person name="Cruzado L."/>
            <person name="Jimenez J."/>
            <person name="Sanchez M."/>
            <person name="del Rey F."/>
            <person name="Benito J."/>
            <person name="Dominguez A."/>
            <person name="Revuelta J.L."/>
            <person name="Moreno S."/>
            <person name="Armstrong J."/>
            <person name="Forsburg S.L."/>
            <person name="Cerutti L."/>
            <person name="Lowe T."/>
            <person name="McCombie W.R."/>
            <person name="Paulsen I."/>
            <person name="Potashkin J."/>
            <person name="Shpakovski G.V."/>
            <person name="Ussery D."/>
            <person name="Barrell B.G."/>
            <person name="Nurse P."/>
        </authorList>
    </citation>
    <scope>NUCLEOTIDE SEQUENCE [LARGE SCALE GENOMIC DNA]</scope>
    <source>
        <strain>972 / ATCC 24843</strain>
    </source>
</reference>
<reference key="2">
    <citation type="journal article" date="2011" name="Science">
        <title>Comparative functional genomics of the fission yeasts.</title>
        <authorList>
            <person name="Rhind N."/>
            <person name="Chen Z."/>
            <person name="Yassour M."/>
            <person name="Thompson D.A."/>
            <person name="Haas B.J."/>
            <person name="Habib N."/>
            <person name="Wapinski I."/>
            <person name="Roy S."/>
            <person name="Lin M.F."/>
            <person name="Heiman D.I."/>
            <person name="Young S.K."/>
            <person name="Furuya K."/>
            <person name="Guo Y."/>
            <person name="Pidoux A."/>
            <person name="Chen H.M."/>
            <person name="Robbertse B."/>
            <person name="Goldberg J.M."/>
            <person name="Aoki K."/>
            <person name="Bayne E.H."/>
            <person name="Berlin A.M."/>
            <person name="Desjardins C.A."/>
            <person name="Dobbs E."/>
            <person name="Dukaj L."/>
            <person name="Fan L."/>
            <person name="FitzGerald M.G."/>
            <person name="French C."/>
            <person name="Gujja S."/>
            <person name="Hansen K."/>
            <person name="Keifenheim D."/>
            <person name="Levin J.Z."/>
            <person name="Mosher R.A."/>
            <person name="Mueller C.A."/>
            <person name="Pfiffner J."/>
            <person name="Priest M."/>
            <person name="Russ C."/>
            <person name="Smialowska A."/>
            <person name="Swoboda P."/>
            <person name="Sykes S.M."/>
            <person name="Vaughn M."/>
            <person name="Vengrova S."/>
            <person name="Yoder R."/>
            <person name="Zeng Q."/>
            <person name="Allshire R."/>
            <person name="Baulcombe D."/>
            <person name="Birren B.W."/>
            <person name="Brown W."/>
            <person name="Ekwall K."/>
            <person name="Kellis M."/>
            <person name="Leatherwood J."/>
            <person name="Levin H."/>
            <person name="Margalit H."/>
            <person name="Martienssen R."/>
            <person name="Nieduszynski C.A."/>
            <person name="Spatafora J.W."/>
            <person name="Friedman N."/>
            <person name="Dalgaard J.Z."/>
            <person name="Baumann P."/>
            <person name="Niki H."/>
            <person name="Regev A."/>
            <person name="Nusbaum C."/>
        </authorList>
    </citation>
    <scope>REVISION OF GENE MODEL</scope>
</reference>
<comment type="function">
    <text evidence="1">Subunit of the V0 complex of vacuolar(H+)-ATPase (V-ATPase), a multisubunit enzyme composed of a peripheral complex (V1) that hydrolyzes ATP and a membrane integral complex (V0) that translocates protons (By similarity). V-ATPase is responsible for acidifying and maintaining the pH of intracellular compartments (By similarity).</text>
</comment>
<comment type="subunit">
    <text evidence="1">V-ATPase is a heteromultimeric enzyme composed of a peripheral catalytic V1 complex (components A to H) attached to an integral membrane V0 proton pore complex (components: a, c, c', c'', d, e, f and VOA1).</text>
</comment>
<comment type="subcellular location">
    <subcellularLocation>
        <location evidence="1">Vacuole membrane</location>
        <topology evidence="2">Multi-pass membrane protein</topology>
    </subcellularLocation>
</comment>
<comment type="similarity">
    <text evidence="3">Belongs to the V-ATPase 116 kDa subunit family.</text>
</comment>
<feature type="chain" id="PRO_0000119223" description="V-type proton ATPase subunit a">
    <location>
        <begin position="1"/>
        <end position="831"/>
    </location>
</feature>
<feature type="topological domain" description="Cytoplasmic" evidence="2">
    <location>
        <begin position="1"/>
        <end position="418"/>
    </location>
</feature>
<feature type="transmembrane region" description="Helical" evidence="2">
    <location>
        <begin position="419"/>
        <end position="437"/>
    </location>
</feature>
<feature type="topological domain" description="Vacuolar" evidence="2">
    <location>
        <begin position="438"/>
        <end position="439"/>
    </location>
</feature>
<feature type="transmembrane region" description="Helical" evidence="2">
    <location>
        <begin position="440"/>
        <end position="456"/>
    </location>
</feature>
<feature type="topological domain" description="Cytoplasmic" evidence="2">
    <location>
        <begin position="457"/>
        <end position="471"/>
    </location>
</feature>
<feature type="transmembrane region" description="Helical" evidence="2">
    <location>
        <begin position="472"/>
        <end position="501"/>
    </location>
</feature>
<feature type="topological domain" description="Vacuolar" evidence="2">
    <location>
        <begin position="502"/>
        <end position="548"/>
    </location>
</feature>
<feature type="transmembrane region" description="Helical" evidence="2">
    <location>
        <begin position="549"/>
        <end position="568"/>
    </location>
</feature>
<feature type="topological domain" description="Cytoplasmic" evidence="2">
    <location>
        <begin position="569"/>
        <end position="586"/>
    </location>
</feature>
<feature type="transmembrane region" description="Helical" evidence="2">
    <location>
        <begin position="587"/>
        <end position="607"/>
    </location>
</feature>
<feature type="topological domain" description="Vacuolar" evidence="2">
    <location>
        <begin position="608"/>
        <end position="650"/>
    </location>
</feature>
<feature type="transmembrane region" description="Helical" evidence="2">
    <location>
        <begin position="651"/>
        <end position="670"/>
    </location>
</feature>
<feature type="topological domain" description="Cytoplasmic" evidence="2">
    <location>
        <begin position="671"/>
        <end position="723"/>
    </location>
</feature>
<feature type="transmembrane region" description="Helical" evidence="2">
    <location>
        <begin position="724"/>
        <end position="748"/>
    </location>
</feature>
<feature type="topological domain" description="Vacuolar" evidence="2">
    <location>
        <begin position="749"/>
        <end position="769"/>
    </location>
</feature>
<feature type="transmembrane region" description="Helical" evidence="2">
    <location>
        <begin position="770"/>
        <end position="808"/>
    </location>
</feature>
<feature type="topological domain" description="Cytoplasmic" evidence="2">
    <location>
        <begin position="809"/>
        <end position="831"/>
    </location>
</feature>
<accession>O13742</accession>